<feature type="chain" id="PRO_0000271005" description="Coiled-coil domain-containing protein 77">
    <location>
        <begin position="1"/>
        <end position="496"/>
    </location>
</feature>
<feature type="region of interest" description="Disordered" evidence="2">
    <location>
        <begin position="1"/>
        <end position="42"/>
    </location>
</feature>
<feature type="region of interest" description="Disordered" evidence="2">
    <location>
        <begin position="170"/>
        <end position="208"/>
    </location>
</feature>
<feature type="coiled-coil region" evidence="1">
    <location>
        <begin position="51"/>
        <end position="113"/>
    </location>
</feature>
<feature type="coiled-coil region" evidence="1">
    <location>
        <begin position="214"/>
        <end position="495"/>
    </location>
</feature>
<feature type="compositionally biased region" description="Polar residues" evidence="2">
    <location>
        <begin position="15"/>
        <end position="33"/>
    </location>
</feature>
<sequence length="496" mass="58494">MDFSPPHGLRGGRSPSLQDTTISSSHTQKNGGDSTPLPPINERLAFLRPSRELLEYYRKKIAEFDEEHEDLVKRLEQYKATYEEQHKLQWEMRQREEEIAELQKALSDMQVYLFQEREHVLRLYSENDRLKIRELEDRKKIQKLLALVGTSEGDITYFHKEPPSKVTIPQRTVQSGDPFDRKVQRSGRAGVKQVPLKAPGKQDRTKAAEKEDPQILLLQVEALQAQLEEQTRLSKEQIETLLEDRKVRMEEAQVQHQRDQDKMKAMTDKLNKTQKLLYESTRDFLQLKFECRANEKSWMAEKDRLLRELDRCREQLAFSIDPEQEREHEREHEREILRLSLAEKATRSSHSEEVKSLTEQLAQAHRLSEMYREQCVTLEDELGRIREEGDVGREIFKERSDKVAKRLQLMTQRYEALEKRRNMEVEGYKTDIKLLRQRLKDVEKQLFKVTLNIGPDQDLAILDAVRQGNKKTQKIQGELRNLKAKIYGLENELRIG</sequence>
<gene>
    <name type="primary">ccdc77</name>
</gene>
<dbReference type="EMBL" id="BC076817">
    <property type="protein sequence ID" value="AAH76817.1"/>
    <property type="molecule type" value="mRNA"/>
</dbReference>
<dbReference type="RefSeq" id="NP_001086567.1">
    <property type="nucleotide sequence ID" value="NM_001093098.1"/>
</dbReference>
<dbReference type="SMR" id="Q6DFC2"/>
<dbReference type="DNASU" id="446402"/>
<dbReference type="GeneID" id="446402"/>
<dbReference type="KEGG" id="xla:446402"/>
<dbReference type="AGR" id="Xenbase:XB-GENE-959315"/>
<dbReference type="CTD" id="446402"/>
<dbReference type="Xenbase" id="XB-GENE-959315">
    <property type="gene designation" value="ccdc77.L"/>
</dbReference>
<dbReference type="OrthoDB" id="191169at2759"/>
<dbReference type="Proteomes" id="UP000186698">
    <property type="component" value="Chromosome 3L"/>
</dbReference>
<dbReference type="Bgee" id="446402">
    <property type="expression patterns" value="Expressed in egg cell and 19 other cell types or tissues"/>
</dbReference>
<dbReference type="GO" id="GO:0005813">
    <property type="term" value="C:centrosome"/>
    <property type="evidence" value="ECO:0000318"/>
    <property type="project" value="GO_Central"/>
</dbReference>
<dbReference type="InterPro" id="IPR037696">
    <property type="entry name" value="CCDC77"/>
</dbReference>
<dbReference type="PANTHER" id="PTHR22091">
    <property type="entry name" value="COILED-COIL DOMAIN-CONTAINING PROTEIN 77"/>
    <property type="match status" value="1"/>
</dbReference>
<dbReference type="PANTHER" id="PTHR22091:SF1">
    <property type="entry name" value="COILED-COIL DOMAIN-CONTAINING PROTEIN 77"/>
    <property type="match status" value="1"/>
</dbReference>
<keyword id="KW-0175">Coiled coil</keyword>
<keyword id="KW-1185">Reference proteome</keyword>
<evidence type="ECO:0000255" key="1"/>
<evidence type="ECO:0000256" key="2">
    <source>
        <dbReference type="SAM" id="MobiDB-lite"/>
    </source>
</evidence>
<protein>
    <recommendedName>
        <fullName>Coiled-coil domain-containing protein 77</fullName>
    </recommendedName>
</protein>
<name>CCD77_XENLA</name>
<accession>Q6DFC2</accession>
<reference key="1">
    <citation type="submission" date="2004-07" db="EMBL/GenBank/DDBJ databases">
        <authorList>
            <consortium name="NIH - Xenopus Gene Collection (XGC) project"/>
        </authorList>
    </citation>
    <scope>NUCLEOTIDE SEQUENCE [LARGE SCALE MRNA]</scope>
    <source>
        <tissue>Oocyte</tissue>
    </source>
</reference>
<proteinExistence type="evidence at transcript level"/>
<organism>
    <name type="scientific">Xenopus laevis</name>
    <name type="common">African clawed frog</name>
    <dbReference type="NCBI Taxonomy" id="8355"/>
    <lineage>
        <taxon>Eukaryota</taxon>
        <taxon>Metazoa</taxon>
        <taxon>Chordata</taxon>
        <taxon>Craniata</taxon>
        <taxon>Vertebrata</taxon>
        <taxon>Euteleostomi</taxon>
        <taxon>Amphibia</taxon>
        <taxon>Batrachia</taxon>
        <taxon>Anura</taxon>
        <taxon>Pipoidea</taxon>
        <taxon>Pipidae</taxon>
        <taxon>Xenopodinae</taxon>
        <taxon>Xenopus</taxon>
        <taxon>Xenopus</taxon>
    </lineage>
</organism>